<gene>
    <name type="primary">DEFB126</name>
</gene>
<feature type="signal peptide" evidence="3">
    <location>
        <begin position="1"/>
        <end position="20"/>
    </location>
</feature>
<feature type="chain" id="PRO_0000436301" description="Beta-defensin 126">
    <location>
        <begin position="21"/>
        <end position="123"/>
    </location>
</feature>
<feature type="region of interest" description="In vitro binds to LPS, mediates antimicrobial activity and inhibits LPS-mediated inflammation" evidence="2">
    <location>
        <begin position="21"/>
        <end position="63"/>
    </location>
</feature>
<feature type="disulfide bond" evidence="1">
    <location>
        <begin position="27"/>
        <end position="58"/>
    </location>
</feature>
<feature type="disulfide bond" evidence="1">
    <location>
        <begin position="34"/>
        <end position="52"/>
    </location>
</feature>
<feature type="disulfide bond" evidence="1">
    <location>
        <begin position="38"/>
        <end position="59"/>
    </location>
</feature>
<feature type="disulfide bond" description="Interchain" evidence="11">
    <location>
        <position position="72"/>
    </location>
</feature>
<evidence type="ECO:0000250" key="1">
    <source>
        <dbReference type="UniProtKB" id="P59665"/>
    </source>
</evidence>
<evidence type="ECO:0000250" key="2">
    <source>
        <dbReference type="UniProtKB" id="Q9BYW3"/>
    </source>
</evidence>
<evidence type="ECO:0000255" key="3"/>
<evidence type="ECO:0000269" key="4">
    <source>
    </source>
</evidence>
<evidence type="ECO:0000269" key="5">
    <source>
    </source>
</evidence>
<evidence type="ECO:0000269" key="6">
    <source>
    </source>
</evidence>
<evidence type="ECO:0000269" key="7">
    <source>
    </source>
</evidence>
<evidence type="ECO:0000269" key="8">
    <source>
    </source>
</evidence>
<evidence type="ECO:0000269" key="9">
    <source>
    </source>
</evidence>
<evidence type="ECO:0000305" key="10"/>
<evidence type="ECO:0000305" key="11">
    <source>
    </source>
</evidence>
<reference key="1">
    <citation type="journal article" date="1999" name="Biol. Reprod.">
        <title>The novel epididymal secretory protein ESP13.2 in Macaca fascicularis.</title>
        <authorList>
            <person name="Perry A.C.F."/>
            <person name="Jones R."/>
            <person name="Moisyadi S."/>
            <person name="Coadwell W.J."/>
            <person name="Hall L."/>
        </authorList>
    </citation>
    <scope>NUCLEOTIDE SEQUENCE [MRNA]</scope>
    <source>
        <tissue>Epididymis</tissue>
    </source>
</reference>
<reference key="2">
    <citation type="journal article" date="2003" name="Biol. Reprod.">
        <title>ESP13.2, a member of the beta-defensin family, is a macaque sperm surface-coating protein involved in the capacitation process.</title>
        <authorList>
            <person name="Yudin A.I."/>
            <person name="Tollner T.L."/>
            <person name="Li M.W."/>
            <person name="Treece C.A."/>
            <person name="Overstreet J.W."/>
            <person name="Cherr G.N."/>
        </authorList>
    </citation>
    <scope>PROTEIN SEQUENCE OF 28-35; 45-54 AND 66-76</scope>
    <scope>FUNCTION</scope>
    <scope>SUBCELLULAR LOCATION</scope>
    <scope>SUBUNIT</scope>
</reference>
<reference key="3">
    <citation type="journal article" date="2004" name="Mol. Reprod. Dev.">
        <title>Macaque sperm release ESP13.2 and PSP94 during capacitation: the absence of ESP13.2 is linked to sperm-zona recognition and binding.</title>
        <authorList>
            <person name="Tollner T.L."/>
            <person name="Yudin A.I."/>
            <person name="Treece C.A."/>
            <person name="Overstreet J.W."/>
            <person name="Cherr G.N."/>
        </authorList>
    </citation>
    <scope>FUNCTION</scope>
</reference>
<reference key="4">
    <citation type="journal article" date="2005" name="Biol. Reprod.">
        <title>Beta-defensin 126 on the cell surface protects sperm from immunorecognition and binding of anti-sperm antibodies.</title>
        <authorList>
            <person name="Yudin A.I."/>
            <person name="Generao S.E."/>
            <person name="Tollner T.L."/>
            <person name="Treece C.A."/>
            <person name="Overstreet J.W."/>
            <person name="Cherr G.N."/>
        </authorList>
    </citation>
    <scope>FUNCTION</scope>
</reference>
<reference key="5">
    <citation type="journal article" date="2005" name="J. Membr. Biol.">
        <title>The carbohydrate structure of DEFB126, the major component of the cynomolgus Macaque sperm plasma membrane glycocalyx.</title>
        <authorList>
            <person name="Yudin A.I."/>
            <person name="Treece C.A."/>
            <person name="Tollner T.L."/>
            <person name="Overstreet J.W."/>
            <person name="Cherr G.N."/>
        </authorList>
    </citation>
    <scope>GLYCOSYLATION</scope>
</reference>
<reference key="6">
    <citation type="journal article" date="2008" name="Biol. Reprod.">
        <title>Beta-defensin 126 on the surface of macaque sperm mediates attachment of sperm to oviductal epithelia.</title>
        <authorList>
            <person name="Tollner T.L."/>
            <person name="Yudin A.I."/>
            <person name="Tarantal A.F."/>
            <person name="Treece C.A."/>
            <person name="Overstreet J.W."/>
            <person name="Cherr G.N."/>
        </authorList>
    </citation>
    <scope>FUNCTION</scope>
</reference>
<reference key="7">
    <citation type="journal article" date="2008" name="Hum. Reprod.">
        <title>Macaque sperm coating protein DEFB126 facilitates sperm penetration of cervical mucus.</title>
        <authorList>
            <person name="Tollner T.L."/>
            <person name="Yudin A.I."/>
            <person name="Treece C.A."/>
            <person name="Overstreet J.W."/>
            <person name="Cherr G.N."/>
        </authorList>
    </citation>
    <scope>FUNCTION</scope>
</reference>
<comment type="function">
    <text evidence="2 5 6 8 9 11">Highly glycosylated atypical beta-defensin involved in several aspects of sperm function. Facilitates sperm transport in the female reproductive tract and contributes to sperm protection against immunodetection; both functions are probably implicating the negative surface charge provided by its O-linked oligosaccharides in the sperm glycocalyx (PubMed:16079310, PubMed:18658160). Involved in binding of sperm to oviductal epithelial cells to form a sperm reservoir until ovulation. Release from the sperm surface during capacitation and ovaluation by an elevation of oviductal fluid pH is unmasking other surface components and allows sperm to penetrate the cumulus matrix and bind to the zona pellucida of the oocyte (PubMed:15349845, PubMed:18003946). In vitro has antimicrobial activity and may inhibit LPS-mediated inflammation (By similarity).</text>
</comment>
<comment type="subunit">
    <text evidence="10 11">Homodimer or homooligomer; disulfide-linked.</text>
</comment>
<comment type="subcellular location">
    <subcellularLocation>
        <location evidence="4">Secreted</location>
    </subcellularLocation>
    <text evidence="4">Secreted by epididymal cells and is absorbed to the surface of sperm during transit through the epididymis. Coats the entire surface of ejaculated sperm.</text>
</comment>
<comment type="tissue specificity">
    <text>High-level and epididymis-specific expression. Detected in epithelial cells lining the efferent ductules, initial segment, and cauda regions of the epididymis, but not on spermatozoa.</text>
</comment>
<comment type="PTM">
    <text evidence="7">O-glycosylated; glycans contain sialic acids alpha(2,3)-linked to galactose and N-acetylgalactosamine. The C-terminal O-glycosylation contributes substantially to the sperm glyocalyx.</text>
</comment>
<comment type="similarity">
    <text evidence="10">Belongs to the beta-defensin family.</text>
</comment>
<name>DB126_MACFA</name>
<organism>
    <name type="scientific">Macaca fascicularis</name>
    <name type="common">Crab-eating macaque</name>
    <name type="synonym">Cynomolgus monkey</name>
    <dbReference type="NCBI Taxonomy" id="9541"/>
    <lineage>
        <taxon>Eukaryota</taxon>
        <taxon>Metazoa</taxon>
        <taxon>Chordata</taxon>
        <taxon>Craniata</taxon>
        <taxon>Vertebrata</taxon>
        <taxon>Euteleostomi</taxon>
        <taxon>Mammalia</taxon>
        <taxon>Eutheria</taxon>
        <taxon>Euarchontoglires</taxon>
        <taxon>Primates</taxon>
        <taxon>Haplorrhini</taxon>
        <taxon>Catarrhini</taxon>
        <taxon>Cercopithecidae</taxon>
        <taxon>Cercopithecinae</taxon>
        <taxon>Macaca</taxon>
    </lineage>
</organism>
<proteinExistence type="evidence at protein level"/>
<accession>Q9BEE3</accession>
<sequence length="123" mass="13151">MKSLLFTLAVFMLLAQLVSGNLYVKRCLNDIGICKKTCKPEEVRSEHGWVMCGKRKACCVPADKRSAYPSFCVHSKTTKTSTVTARATATTATTATAATPLMISNGLISLMTTMAATPVSPTT</sequence>
<keyword id="KW-0044">Antibiotic</keyword>
<keyword id="KW-0929">Antimicrobial</keyword>
<keyword id="KW-0165">Cleavage on pair of basic residues</keyword>
<keyword id="KW-0211">Defensin</keyword>
<keyword id="KW-0903">Direct protein sequencing</keyword>
<keyword id="KW-1015">Disulfide bond</keyword>
<keyword id="KW-0278">Fertilization</keyword>
<keyword id="KW-1185">Reference proteome</keyword>
<keyword id="KW-0964">Secreted</keyword>
<keyword id="KW-0732">Signal</keyword>
<protein>
    <recommendedName>
        <fullName>Beta-defensin 126</fullName>
    </recommendedName>
    <alternativeName>
        <fullName>Defensin, beta 126</fullName>
    </alternativeName>
    <alternativeName>
        <fullName>Epididymal secretory protein 13.2</fullName>
        <shortName>ESP13.2</shortName>
    </alternativeName>
</protein>
<dbReference type="EMBL" id="AJ236909">
    <property type="protein sequence ID" value="CAC27133.1"/>
    <property type="molecule type" value="mRNA"/>
</dbReference>
<dbReference type="RefSeq" id="NP_001274569.1">
    <property type="nucleotide sequence ID" value="NM_001287640.1"/>
</dbReference>
<dbReference type="RefSeq" id="XP_045220400.1">
    <property type="nucleotide sequence ID" value="XM_045364465.2"/>
</dbReference>
<dbReference type="STRING" id="9541.ENSMFAP00000038151"/>
<dbReference type="Ensembl" id="ENSMFAT00000012405.2">
    <property type="protein sequence ID" value="ENSMFAP00000038151.1"/>
    <property type="gene ID" value="ENSMFAG00000038448.2"/>
</dbReference>
<dbReference type="GeneID" id="102132878"/>
<dbReference type="VEuPathDB" id="HostDB:ENSMFAG00000038448"/>
<dbReference type="eggNOG" id="ENOG502TDX7">
    <property type="taxonomic scope" value="Eukaryota"/>
</dbReference>
<dbReference type="GeneTree" id="ENSGT00390000012226"/>
<dbReference type="OMA" id="DCCVPAD"/>
<dbReference type="Proteomes" id="UP000233100">
    <property type="component" value="Chromosome 10"/>
</dbReference>
<dbReference type="GO" id="GO:0005576">
    <property type="term" value="C:extracellular region"/>
    <property type="evidence" value="ECO:0000303"/>
    <property type="project" value="UniProtKB"/>
</dbReference>
<dbReference type="GO" id="GO:0030414">
    <property type="term" value="F:peptidase inhibitor activity"/>
    <property type="evidence" value="ECO:0000303"/>
    <property type="project" value="UniProtKB"/>
</dbReference>
<dbReference type="GO" id="GO:0061844">
    <property type="term" value="P:antimicrobial humoral immune response mediated by antimicrobial peptide"/>
    <property type="evidence" value="ECO:0007669"/>
    <property type="project" value="Ensembl"/>
</dbReference>
<dbReference type="GO" id="GO:0050829">
    <property type="term" value="P:defense response to Gram-negative bacterium"/>
    <property type="evidence" value="ECO:0007669"/>
    <property type="project" value="Ensembl"/>
</dbReference>
<dbReference type="GO" id="GO:0006508">
    <property type="term" value="P:proteolysis"/>
    <property type="evidence" value="ECO:0000303"/>
    <property type="project" value="UniProtKB"/>
</dbReference>
<dbReference type="GO" id="GO:0007338">
    <property type="term" value="P:single fertilization"/>
    <property type="evidence" value="ECO:0007669"/>
    <property type="project" value="UniProtKB-KW"/>
</dbReference>
<dbReference type="InterPro" id="IPR050544">
    <property type="entry name" value="Beta-defensin"/>
</dbReference>
<dbReference type="PANTHER" id="PTHR15001:SF3">
    <property type="entry name" value="BETA-DEFENSIN 123"/>
    <property type="match status" value="1"/>
</dbReference>
<dbReference type="PANTHER" id="PTHR15001">
    <property type="entry name" value="BETA-DEFENSIN 123-RELATED"/>
    <property type="match status" value="1"/>
</dbReference>